<accession>Q1CMQ3</accession>
<accession>C4GNU7</accession>
<dbReference type="EC" id="7.6.2.15" evidence="1"/>
<dbReference type="EMBL" id="CP000305">
    <property type="protein sequence ID" value="ABG16727.1"/>
    <property type="molecule type" value="Genomic_DNA"/>
</dbReference>
<dbReference type="EMBL" id="ACNQ01000006">
    <property type="protein sequence ID" value="EEO78179.1"/>
    <property type="molecule type" value="Genomic_DNA"/>
</dbReference>
<dbReference type="RefSeq" id="WP_002210464.1">
    <property type="nucleotide sequence ID" value="NZ_ACNQ01000006.1"/>
</dbReference>
<dbReference type="SMR" id="Q1CMQ3"/>
<dbReference type="GeneID" id="57974090"/>
<dbReference type="KEGG" id="ypn:YPN_0395"/>
<dbReference type="HOGENOM" id="CLU_000604_1_22_6"/>
<dbReference type="Proteomes" id="UP000008936">
    <property type="component" value="Chromosome"/>
</dbReference>
<dbReference type="GO" id="GO:0005886">
    <property type="term" value="C:plasma membrane"/>
    <property type="evidence" value="ECO:0007669"/>
    <property type="project" value="UniProtKB-SubCell"/>
</dbReference>
<dbReference type="GO" id="GO:0048502">
    <property type="term" value="F:ABC-type thiamine transporter activity"/>
    <property type="evidence" value="ECO:0007669"/>
    <property type="project" value="UniProtKB-EC"/>
</dbReference>
<dbReference type="GO" id="GO:0005524">
    <property type="term" value="F:ATP binding"/>
    <property type="evidence" value="ECO:0007669"/>
    <property type="project" value="UniProtKB-KW"/>
</dbReference>
<dbReference type="GO" id="GO:0016887">
    <property type="term" value="F:ATP hydrolysis activity"/>
    <property type="evidence" value="ECO:0007669"/>
    <property type="project" value="InterPro"/>
</dbReference>
<dbReference type="FunFam" id="3.40.50.300:FF:001071">
    <property type="entry name" value="Thiamine import ATP-binding protein ThiQ"/>
    <property type="match status" value="1"/>
</dbReference>
<dbReference type="Gene3D" id="3.40.50.300">
    <property type="entry name" value="P-loop containing nucleotide triphosphate hydrolases"/>
    <property type="match status" value="1"/>
</dbReference>
<dbReference type="InterPro" id="IPR003593">
    <property type="entry name" value="AAA+_ATPase"/>
</dbReference>
<dbReference type="InterPro" id="IPR050093">
    <property type="entry name" value="ABC_SmlMolc_Importer"/>
</dbReference>
<dbReference type="InterPro" id="IPR003439">
    <property type="entry name" value="ABC_transporter-like_ATP-bd"/>
</dbReference>
<dbReference type="InterPro" id="IPR017871">
    <property type="entry name" value="ABC_transporter-like_CS"/>
</dbReference>
<dbReference type="InterPro" id="IPR027417">
    <property type="entry name" value="P-loop_NTPase"/>
</dbReference>
<dbReference type="InterPro" id="IPR005968">
    <property type="entry name" value="Thiamine_ABC_ThiQ"/>
</dbReference>
<dbReference type="NCBIfam" id="NF008039">
    <property type="entry name" value="PRK10771.1"/>
    <property type="match status" value="1"/>
</dbReference>
<dbReference type="NCBIfam" id="TIGR01277">
    <property type="entry name" value="thiQ"/>
    <property type="match status" value="1"/>
</dbReference>
<dbReference type="PANTHER" id="PTHR42781">
    <property type="entry name" value="SPERMIDINE/PUTRESCINE IMPORT ATP-BINDING PROTEIN POTA"/>
    <property type="match status" value="1"/>
</dbReference>
<dbReference type="PANTHER" id="PTHR42781:SF1">
    <property type="entry name" value="THIAMINE IMPORT ATP-BINDING PROTEIN THIQ"/>
    <property type="match status" value="1"/>
</dbReference>
<dbReference type="Pfam" id="PF00005">
    <property type="entry name" value="ABC_tran"/>
    <property type="match status" value="1"/>
</dbReference>
<dbReference type="SMART" id="SM00382">
    <property type="entry name" value="AAA"/>
    <property type="match status" value="1"/>
</dbReference>
<dbReference type="SUPFAM" id="SSF52540">
    <property type="entry name" value="P-loop containing nucleoside triphosphate hydrolases"/>
    <property type="match status" value="1"/>
</dbReference>
<dbReference type="PROSITE" id="PS00211">
    <property type="entry name" value="ABC_TRANSPORTER_1"/>
    <property type="match status" value="1"/>
</dbReference>
<dbReference type="PROSITE" id="PS50893">
    <property type="entry name" value="ABC_TRANSPORTER_2"/>
    <property type="match status" value="1"/>
</dbReference>
<dbReference type="PROSITE" id="PS51288">
    <property type="entry name" value="THIQ"/>
    <property type="match status" value="1"/>
</dbReference>
<gene>
    <name evidence="1" type="primary">thiQ</name>
    <name type="ordered locus">YPN_0395</name>
    <name type="ORF">YP516_0403</name>
</gene>
<proteinExistence type="inferred from homology"/>
<protein>
    <recommendedName>
        <fullName evidence="1">Thiamine import ATP-binding protein ThiQ</fullName>
        <ecNumber evidence="1">7.6.2.15</ecNumber>
    </recommendedName>
</protein>
<name>THIQ_YERPN</name>
<reference key="1">
    <citation type="journal article" date="2006" name="J. Bacteriol.">
        <title>Complete genome sequence of Yersinia pestis strains Antiqua and Nepal516: evidence of gene reduction in an emerging pathogen.</title>
        <authorList>
            <person name="Chain P.S.G."/>
            <person name="Hu P."/>
            <person name="Malfatti S.A."/>
            <person name="Radnedge L."/>
            <person name="Larimer F."/>
            <person name="Vergez L.M."/>
            <person name="Worsham P."/>
            <person name="Chu M.C."/>
            <person name="Andersen G.L."/>
        </authorList>
    </citation>
    <scope>NUCLEOTIDE SEQUENCE [LARGE SCALE GENOMIC DNA]</scope>
    <source>
        <strain>Nepal516</strain>
    </source>
</reference>
<reference key="2">
    <citation type="submission" date="2009-04" db="EMBL/GenBank/DDBJ databases">
        <title>Yersinia pestis Nepal516A whole genome shotgun sequencing project.</title>
        <authorList>
            <person name="Plunkett G. III"/>
            <person name="Anderson B.D."/>
            <person name="Baumler D.J."/>
            <person name="Burland V."/>
            <person name="Cabot E.L."/>
            <person name="Glasner J.D."/>
            <person name="Mau B."/>
            <person name="Neeno-Eckwall E."/>
            <person name="Perna N.T."/>
            <person name="Munk A.C."/>
            <person name="Tapia R."/>
            <person name="Green L.D."/>
            <person name="Rogers Y.C."/>
            <person name="Detter J.C."/>
            <person name="Bruce D.C."/>
            <person name="Brettin T.S."/>
        </authorList>
    </citation>
    <scope>NUCLEOTIDE SEQUENCE [LARGE SCALE GENOMIC DNA]</scope>
    <source>
        <strain>Nepal516</strain>
    </source>
</reference>
<sequence>MLKLEKITYLYDHLPMCFDLRIQPGERVAILGPSGAGKSTLLSLIAGFLAPTGGHMLLNNQDHTASTPAQRPVSMLFQENNLFAHLTVEQNIGLGLHPGLKLSGEQRLLLQHIAQQVGLESCLDRLPAQLSGGQRQRAALARCLVRSQPILLLDEPFSALDPALRNEMLQLVDQVCINRQLTLLMVSHNLDDAARIAQRTLLIVEGRIDYDGPTQALVDGSAAKASVLGIKSAVIS</sequence>
<keyword id="KW-0067">ATP-binding</keyword>
<keyword id="KW-0997">Cell inner membrane</keyword>
<keyword id="KW-1003">Cell membrane</keyword>
<keyword id="KW-0472">Membrane</keyword>
<keyword id="KW-0547">Nucleotide-binding</keyword>
<keyword id="KW-1278">Translocase</keyword>
<keyword id="KW-0813">Transport</keyword>
<feature type="chain" id="PRO_0000274472" description="Thiamine import ATP-binding protein ThiQ">
    <location>
        <begin position="1"/>
        <end position="236"/>
    </location>
</feature>
<feature type="domain" description="ABC transporter" evidence="1">
    <location>
        <begin position="2"/>
        <end position="230"/>
    </location>
</feature>
<feature type="binding site" evidence="1">
    <location>
        <begin position="32"/>
        <end position="39"/>
    </location>
    <ligand>
        <name>ATP</name>
        <dbReference type="ChEBI" id="CHEBI:30616"/>
    </ligand>
</feature>
<evidence type="ECO:0000255" key="1">
    <source>
        <dbReference type="HAMAP-Rule" id="MF_01723"/>
    </source>
</evidence>
<comment type="function">
    <text evidence="1">Part of the ABC transporter complex ThiBPQ involved in thiamine import. Responsible for energy coupling to the transport system.</text>
</comment>
<comment type="catalytic activity">
    <reaction evidence="1">
        <text>thiamine(out) + ATP + H2O = thiamine(in) + ADP + phosphate + H(+)</text>
        <dbReference type="Rhea" id="RHEA:29811"/>
        <dbReference type="ChEBI" id="CHEBI:15377"/>
        <dbReference type="ChEBI" id="CHEBI:15378"/>
        <dbReference type="ChEBI" id="CHEBI:18385"/>
        <dbReference type="ChEBI" id="CHEBI:30616"/>
        <dbReference type="ChEBI" id="CHEBI:43474"/>
        <dbReference type="ChEBI" id="CHEBI:456216"/>
        <dbReference type="EC" id="7.6.2.15"/>
    </reaction>
</comment>
<comment type="subunit">
    <text evidence="1">The complex is composed of two ATP-binding proteins (ThiQ), two transmembrane proteins (ThiP) and a solute-binding protein (ThiB).</text>
</comment>
<comment type="subcellular location">
    <subcellularLocation>
        <location evidence="1">Cell inner membrane</location>
        <topology evidence="1">Peripheral membrane protein</topology>
    </subcellularLocation>
</comment>
<comment type="similarity">
    <text evidence="1">Belongs to the ABC transporter superfamily. Thiamine importer (TC 3.A.1.19.1) family.</text>
</comment>
<organism>
    <name type="scientific">Yersinia pestis bv. Antiqua (strain Nepal516)</name>
    <dbReference type="NCBI Taxonomy" id="377628"/>
    <lineage>
        <taxon>Bacteria</taxon>
        <taxon>Pseudomonadati</taxon>
        <taxon>Pseudomonadota</taxon>
        <taxon>Gammaproteobacteria</taxon>
        <taxon>Enterobacterales</taxon>
        <taxon>Yersiniaceae</taxon>
        <taxon>Yersinia</taxon>
    </lineage>
</organism>